<keyword id="KW-0067">ATP-binding</keyword>
<keyword id="KW-0963">Cytoplasm</keyword>
<keyword id="KW-0418">Kinase</keyword>
<keyword id="KW-0547">Nucleotide-binding</keyword>
<keyword id="KW-1185">Reference proteome</keyword>
<keyword id="KW-0808">Transferase</keyword>
<name>URK_CLOPE</name>
<comment type="catalytic activity">
    <reaction evidence="1">
        <text>uridine + ATP = UMP + ADP + H(+)</text>
        <dbReference type="Rhea" id="RHEA:16825"/>
        <dbReference type="ChEBI" id="CHEBI:15378"/>
        <dbReference type="ChEBI" id="CHEBI:16704"/>
        <dbReference type="ChEBI" id="CHEBI:30616"/>
        <dbReference type="ChEBI" id="CHEBI:57865"/>
        <dbReference type="ChEBI" id="CHEBI:456216"/>
        <dbReference type="EC" id="2.7.1.48"/>
    </reaction>
</comment>
<comment type="catalytic activity">
    <reaction evidence="1">
        <text>cytidine + ATP = CMP + ADP + H(+)</text>
        <dbReference type="Rhea" id="RHEA:24674"/>
        <dbReference type="ChEBI" id="CHEBI:15378"/>
        <dbReference type="ChEBI" id="CHEBI:17562"/>
        <dbReference type="ChEBI" id="CHEBI:30616"/>
        <dbReference type="ChEBI" id="CHEBI:60377"/>
        <dbReference type="ChEBI" id="CHEBI:456216"/>
        <dbReference type="EC" id="2.7.1.48"/>
    </reaction>
</comment>
<comment type="pathway">
    <text evidence="1">Pyrimidine metabolism; CTP biosynthesis via salvage pathway; CTP from cytidine: step 1/3.</text>
</comment>
<comment type="pathway">
    <text evidence="1">Pyrimidine metabolism; UMP biosynthesis via salvage pathway; UMP from uridine: step 1/1.</text>
</comment>
<comment type="subcellular location">
    <subcellularLocation>
        <location evidence="1">Cytoplasm</location>
    </subcellularLocation>
</comment>
<comment type="similarity">
    <text evidence="1">Belongs to the uridine kinase family.</text>
</comment>
<proteinExistence type="inferred from homology"/>
<dbReference type="EC" id="2.7.1.48" evidence="1"/>
<dbReference type="EMBL" id="BA000016">
    <property type="protein sequence ID" value="BAB81476.1"/>
    <property type="molecule type" value="Genomic_DNA"/>
</dbReference>
<dbReference type="RefSeq" id="WP_003459577.1">
    <property type="nucleotide sequence ID" value="NC_003366.1"/>
</dbReference>
<dbReference type="SMR" id="Q8XJI6"/>
<dbReference type="STRING" id="195102.gene:10491034"/>
<dbReference type="GeneID" id="93001694"/>
<dbReference type="KEGG" id="cpe:CPE1770"/>
<dbReference type="HOGENOM" id="CLU_021278_1_2_9"/>
<dbReference type="UniPathway" id="UPA00574">
    <property type="reaction ID" value="UER00637"/>
</dbReference>
<dbReference type="UniPathway" id="UPA00579">
    <property type="reaction ID" value="UER00640"/>
</dbReference>
<dbReference type="Proteomes" id="UP000000818">
    <property type="component" value="Chromosome"/>
</dbReference>
<dbReference type="GO" id="GO:0005737">
    <property type="term" value="C:cytoplasm"/>
    <property type="evidence" value="ECO:0007669"/>
    <property type="project" value="UniProtKB-SubCell"/>
</dbReference>
<dbReference type="GO" id="GO:0005524">
    <property type="term" value="F:ATP binding"/>
    <property type="evidence" value="ECO:0007669"/>
    <property type="project" value="UniProtKB-UniRule"/>
</dbReference>
<dbReference type="GO" id="GO:0043771">
    <property type="term" value="F:cytidine kinase activity"/>
    <property type="evidence" value="ECO:0007669"/>
    <property type="project" value="RHEA"/>
</dbReference>
<dbReference type="GO" id="GO:0004849">
    <property type="term" value="F:uridine kinase activity"/>
    <property type="evidence" value="ECO:0007669"/>
    <property type="project" value="UniProtKB-UniRule"/>
</dbReference>
<dbReference type="GO" id="GO:0044211">
    <property type="term" value="P:CTP salvage"/>
    <property type="evidence" value="ECO:0007669"/>
    <property type="project" value="UniProtKB-UniRule"/>
</dbReference>
<dbReference type="GO" id="GO:0044206">
    <property type="term" value="P:UMP salvage"/>
    <property type="evidence" value="ECO:0007669"/>
    <property type="project" value="UniProtKB-UniRule"/>
</dbReference>
<dbReference type="CDD" id="cd02023">
    <property type="entry name" value="UMPK"/>
    <property type="match status" value="1"/>
</dbReference>
<dbReference type="Gene3D" id="3.40.50.300">
    <property type="entry name" value="P-loop containing nucleotide triphosphate hydrolases"/>
    <property type="match status" value="1"/>
</dbReference>
<dbReference type="HAMAP" id="MF_00551">
    <property type="entry name" value="Uridine_kinase"/>
    <property type="match status" value="1"/>
</dbReference>
<dbReference type="InterPro" id="IPR027417">
    <property type="entry name" value="P-loop_NTPase"/>
</dbReference>
<dbReference type="InterPro" id="IPR006083">
    <property type="entry name" value="PRK/URK"/>
</dbReference>
<dbReference type="InterPro" id="IPR026008">
    <property type="entry name" value="Uridine_kinase"/>
</dbReference>
<dbReference type="InterPro" id="IPR000764">
    <property type="entry name" value="Uridine_kinase-like"/>
</dbReference>
<dbReference type="NCBIfam" id="NF004018">
    <property type="entry name" value="PRK05480.1"/>
    <property type="match status" value="1"/>
</dbReference>
<dbReference type="NCBIfam" id="TIGR00235">
    <property type="entry name" value="udk"/>
    <property type="match status" value="1"/>
</dbReference>
<dbReference type="PANTHER" id="PTHR10285">
    <property type="entry name" value="URIDINE KINASE"/>
    <property type="match status" value="1"/>
</dbReference>
<dbReference type="Pfam" id="PF00485">
    <property type="entry name" value="PRK"/>
    <property type="match status" value="1"/>
</dbReference>
<dbReference type="PRINTS" id="PR00988">
    <property type="entry name" value="URIDINKINASE"/>
</dbReference>
<dbReference type="SUPFAM" id="SSF52540">
    <property type="entry name" value="P-loop containing nucleoside triphosphate hydrolases"/>
    <property type="match status" value="1"/>
</dbReference>
<organism>
    <name type="scientific">Clostridium perfringens (strain 13 / Type A)</name>
    <dbReference type="NCBI Taxonomy" id="195102"/>
    <lineage>
        <taxon>Bacteria</taxon>
        <taxon>Bacillati</taxon>
        <taxon>Bacillota</taxon>
        <taxon>Clostridia</taxon>
        <taxon>Eubacteriales</taxon>
        <taxon>Clostridiaceae</taxon>
        <taxon>Clostridium</taxon>
    </lineage>
</organism>
<gene>
    <name evidence="1" type="primary">udk</name>
    <name type="ordered locus">CPE1770</name>
</gene>
<protein>
    <recommendedName>
        <fullName evidence="1">Uridine kinase</fullName>
        <ecNumber evidence="1">2.7.1.48</ecNumber>
    </recommendedName>
    <alternativeName>
        <fullName evidence="1">Cytidine monophosphokinase</fullName>
    </alternativeName>
    <alternativeName>
        <fullName evidence="1">Uridine monophosphokinase</fullName>
    </alternativeName>
</protein>
<evidence type="ECO:0000255" key="1">
    <source>
        <dbReference type="HAMAP-Rule" id="MF_00551"/>
    </source>
</evidence>
<feature type="chain" id="PRO_0000164467" description="Uridine kinase">
    <location>
        <begin position="1"/>
        <end position="208"/>
    </location>
</feature>
<feature type="binding site" evidence="1">
    <location>
        <begin position="11"/>
        <end position="18"/>
    </location>
    <ligand>
        <name>ATP</name>
        <dbReference type="ChEBI" id="CHEBI:30616"/>
    </ligand>
</feature>
<sequence length="208" mass="23884">MKRPIFIGITGGTGSGKSTIAKEIYRQFGEDCIAMIEQDSYYKDQSHLSMEDRVKTNYDHPNAFDNNLLVSHLESLLNGHSIQKPSYDFSIHNRIEDTTKVEPKEIVIVEGILILEDPRIRELLDIKIYVDTDADVRIIRRMVRDINERGRTMESVINQYLNVVKPMHNQFTEPTKKFADIIIPEGGHNKVAIDIIVAKIKEVLGKYE</sequence>
<accession>Q8XJI6</accession>
<reference key="1">
    <citation type="journal article" date="2002" name="Proc. Natl. Acad. Sci. U.S.A.">
        <title>Complete genome sequence of Clostridium perfringens, an anaerobic flesh-eater.</title>
        <authorList>
            <person name="Shimizu T."/>
            <person name="Ohtani K."/>
            <person name="Hirakawa H."/>
            <person name="Ohshima K."/>
            <person name="Yamashita A."/>
            <person name="Shiba T."/>
            <person name="Ogasawara N."/>
            <person name="Hattori M."/>
            <person name="Kuhara S."/>
            <person name="Hayashi H."/>
        </authorList>
    </citation>
    <scope>NUCLEOTIDE SEQUENCE [LARGE SCALE GENOMIC DNA]</scope>
    <source>
        <strain>13 / Type A</strain>
    </source>
</reference>